<comment type="function">
    <text evidence="1">One of the primary rRNA binding proteins, it binds directly to 16S rRNA where it nucleates assembly of the head domain of the 30S subunit. Is located at the subunit interface close to the decoding center, probably blocks exit of the E-site tRNA.</text>
</comment>
<comment type="subunit">
    <text evidence="1">Part of the 30S ribosomal subunit. Contacts proteins S9 and S11.</text>
</comment>
<comment type="similarity">
    <text evidence="1">Belongs to the universal ribosomal protein uS7 family.</text>
</comment>
<sequence>MPRRREVPKREVLPDPKYGNVDVAKFMNMLMLSGKKSVAERIVYGAFEQIQTKGGKDPLEVFTVALNNVKPVVEVKSRRVGGANYQVPVEVRPSRRMALAMRWLREAAKKRSEKSMALRLAGELSEAAEGRGGAMKKRDEVHRMAEANRAFSHFRF</sequence>
<organism>
    <name type="scientific">Burkholderia thailandensis (strain ATCC 700388 / DSM 13276 / CCUG 48851 / CIP 106301 / E264)</name>
    <dbReference type="NCBI Taxonomy" id="271848"/>
    <lineage>
        <taxon>Bacteria</taxon>
        <taxon>Pseudomonadati</taxon>
        <taxon>Pseudomonadota</taxon>
        <taxon>Betaproteobacteria</taxon>
        <taxon>Burkholderiales</taxon>
        <taxon>Burkholderiaceae</taxon>
        <taxon>Burkholderia</taxon>
        <taxon>pseudomallei group</taxon>
    </lineage>
</organism>
<name>RS7_BURTA</name>
<dbReference type="EMBL" id="CP000086">
    <property type="protein sequence ID" value="ABC38053.1"/>
    <property type="molecule type" value="Genomic_DNA"/>
</dbReference>
<dbReference type="RefSeq" id="WP_004198359.1">
    <property type="nucleotide sequence ID" value="NZ_CP008786.1"/>
</dbReference>
<dbReference type="SMR" id="Q2SU23"/>
<dbReference type="GeneID" id="93171021"/>
<dbReference type="KEGG" id="bte:BTH_I3072"/>
<dbReference type="HOGENOM" id="CLU_072226_1_1_4"/>
<dbReference type="Proteomes" id="UP000001930">
    <property type="component" value="Chromosome I"/>
</dbReference>
<dbReference type="GO" id="GO:0015935">
    <property type="term" value="C:small ribosomal subunit"/>
    <property type="evidence" value="ECO:0007669"/>
    <property type="project" value="InterPro"/>
</dbReference>
<dbReference type="GO" id="GO:0019843">
    <property type="term" value="F:rRNA binding"/>
    <property type="evidence" value="ECO:0007669"/>
    <property type="project" value="UniProtKB-UniRule"/>
</dbReference>
<dbReference type="GO" id="GO:0003735">
    <property type="term" value="F:structural constituent of ribosome"/>
    <property type="evidence" value="ECO:0007669"/>
    <property type="project" value="InterPro"/>
</dbReference>
<dbReference type="GO" id="GO:0000049">
    <property type="term" value="F:tRNA binding"/>
    <property type="evidence" value="ECO:0007669"/>
    <property type="project" value="UniProtKB-UniRule"/>
</dbReference>
<dbReference type="GO" id="GO:0006412">
    <property type="term" value="P:translation"/>
    <property type="evidence" value="ECO:0007669"/>
    <property type="project" value="UniProtKB-UniRule"/>
</dbReference>
<dbReference type="CDD" id="cd14869">
    <property type="entry name" value="uS7_Bacteria"/>
    <property type="match status" value="1"/>
</dbReference>
<dbReference type="FunFam" id="1.10.455.10:FF:000001">
    <property type="entry name" value="30S ribosomal protein S7"/>
    <property type="match status" value="1"/>
</dbReference>
<dbReference type="Gene3D" id="1.10.455.10">
    <property type="entry name" value="Ribosomal protein S7 domain"/>
    <property type="match status" value="1"/>
</dbReference>
<dbReference type="HAMAP" id="MF_00480_B">
    <property type="entry name" value="Ribosomal_uS7_B"/>
    <property type="match status" value="1"/>
</dbReference>
<dbReference type="InterPro" id="IPR000235">
    <property type="entry name" value="Ribosomal_uS7"/>
</dbReference>
<dbReference type="InterPro" id="IPR005717">
    <property type="entry name" value="Ribosomal_uS7_bac/org-type"/>
</dbReference>
<dbReference type="InterPro" id="IPR020606">
    <property type="entry name" value="Ribosomal_uS7_CS"/>
</dbReference>
<dbReference type="InterPro" id="IPR023798">
    <property type="entry name" value="Ribosomal_uS7_dom"/>
</dbReference>
<dbReference type="InterPro" id="IPR036823">
    <property type="entry name" value="Ribosomal_uS7_dom_sf"/>
</dbReference>
<dbReference type="NCBIfam" id="TIGR01029">
    <property type="entry name" value="rpsG_bact"/>
    <property type="match status" value="1"/>
</dbReference>
<dbReference type="PANTHER" id="PTHR11205">
    <property type="entry name" value="RIBOSOMAL PROTEIN S7"/>
    <property type="match status" value="1"/>
</dbReference>
<dbReference type="Pfam" id="PF00177">
    <property type="entry name" value="Ribosomal_S7"/>
    <property type="match status" value="1"/>
</dbReference>
<dbReference type="PIRSF" id="PIRSF002122">
    <property type="entry name" value="RPS7p_RPS7a_RPS5e_RPS7o"/>
    <property type="match status" value="1"/>
</dbReference>
<dbReference type="SUPFAM" id="SSF47973">
    <property type="entry name" value="Ribosomal protein S7"/>
    <property type="match status" value="1"/>
</dbReference>
<dbReference type="PROSITE" id="PS00052">
    <property type="entry name" value="RIBOSOMAL_S7"/>
    <property type="match status" value="1"/>
</dbReference>
<feature type="chain" id="PRO_0000241753" description="Small ribosomal subunit protein uS7">
    <location>
        <begin position="1"/>
        <end position="156"/>
    </location>
</feature>
<protein>
    <recommendedName>
        <fullName evidence="1">Small ribosomal subunit protein uS7</fullName>
    </recommendedName>
    <alternativeName>
        <fullName evidence="2">30S ribosomal protein S7</fullName>
    </alternativeName>
</protein>
<proteinExistence type="inferred from homology"/>
<gene>
    <name evidence="1" type="primary">rpsG</name>
    <name type="ordered locus">BTH_I3072</name>
</gene>
<evidence type="ECO:0000255" key="1">
    <source>
        <dbReference type="HAMAP-Rule" id="MF_00480"/>
    </source>
</evidence>
<evidence type="ECO:0000305" key="2"/>
<accession>Q2SU23</accession>
<keyword id="KW-0687">Ribonucleoprotein</keyword>
<keyword id="KW-0689">Ribosomal protein</keyword>
<keyword id="KW-0694">RNA-binding</keyword>
<keyword id="KW-0699">rRNA-binding</keyword>
<keyword id="KW-0820">tRNA-binding</keyword>
<reference key="1">
    <citation type="journal article" date="2005" name="BMC Genomics">
        <title>Bacterial genome adaptation to niches: divergence of the potential virulence genes in three Burkholderia species of different survival strategies.</title>
        <authorList>
            <person name="Kim H.S."/>
            <person name="Schell M.A."/>
            <person name="Yu Y."/>
            <person name="Ulrich R.L."/>
            <person name="Sarria S.H."/>
            <person name="Nierman W.C."/>
            <person name="DeShazer D."/>
        </authorList>
    </citation>
    <scope>NUCLEOTIDE SEQUENCE [LARGE SCALE GENOMIC DNA]</scope>
    <source>
        <strain>ATCC 700388 / DSM 13276 / CCUG 48851 / CIP 106301 / E264</strain>
    </source>
</reference>